<sequence length="82" mass="9208">MASPEMEERLRKIIVDQLGVEPEQVVPSASFTKDLNADSLDLVELIMSIEEEFGVEISDEEAEKIQTVADALNYLETHQSNE</sequence>
<keyword id="KW-0963">Cytoplasm</keyword>
<keyword id="KW-0275">Fatty acid biosynthesis</keyword>
<keyword id="KW-0276">Fatty acid metabolism</keyword>
<keyword id="KW-0444">Lipid biosynthesis</keyword>
<keyword id="KW-0443">Lipid metabolism</keyword>
<keyword id="KW-0596">Phosphopantetheine</keyword>
<keyword id="KW-0597">Phosphoprotein</keyword>
<keyword id="KW-1185">Reference proteome</keyword>
<evidence type="ECO:0000255" key="1">
    <source>
        <dbReference type="HAMAP-Rule" id="MF_01217"/>
    </source>
</evidence>
<evidence type="ECO:0000255" key="2">
    <source>
        <dbReference type="PROSITE-ProRule" id="PRU00258"/>
    </source>
</evidence>
<accession>A9WKH6</accession>
<organism>
    <name type="scientific">Chloroflexus aurantiacus (strain ATCC 29366 / DSM 635 / J-10-fl)</name>
    <dbReference type="NCBI Taxonomy" id="324602"/>
    <lineage>
        <taxon>Bacteria</taxon>
        <taxon>Bacillati</taxon>
        <taxon>Chloroflexota</taxon>
        <taxon>Chloroflexia</taxon>
        <taxon>Chloroflexales</taxon>
        <taxon>Chloroflexineae</taxon>
        <taxon>Chloroflexaceae</taxon>
        <taxon>Chloroflexus</taxon>
    </lineage>
</organism>
<dbReference type="EMBL" id="CP000909">
    <property type="protein sequence ID" value="ABY36604.1"/>
    <property type="molecule type" value="Genomic_DNA"/>
</dbReference>
<dbReference type="RefSeq" id="WP_012259257.1">
    <property type="nucleotide sequence ID" value="NC_010175.1"/>
</dbReference>
<dbReference type="RefSeq" id="YP_001636993.1">
    <property type="nucleotide sequence ID" value="NC_010175.1"/>
</dbReference>
<dbReference type="SMR" id="A9WKH6"/>
<dbReference type="FunCoup" id="A9WKH6">
    <property type="interactions" value="331"/>
</dbReference>
<dbReference type="STRING" id="324602.Caur_3419"/>
<dbReference type="EnsemblBacteria" id="ABY36604">
    <property type="protein sequence ID" value="ABY36604"/>
    <property type="gene ID" value="Caur_3419"/>
</dbReference>
<dbReference type="KEGG" id="cau:Caur_3419"/>
<dbReference type="PATRIC" id="fig|324602.8.peg.3850"/>
<dbReference type="eggNOG" id="COG0236">
    <property type="taxonomic scope" value="Bacteria"/>
</dbReference>
<dbReference type="HOGENOM" id="CLU_108696_5_3_0"/>
<dbReference type="InParanoid" id="A9WKH6"/>
<dbReference type="UniPathway" id="UPA00094"/>
<dbReference type="Proteomes" id="UP000002008">
    <property type="component" value="Chromosome"/>
</dbReference>
<dbReference type="GO" id="GO:0005829">
    <property type="term" value="C:cytosol"/>
    <property type="evidence" value="ECO:0000318"/>
    <property type="project" value="GO_Central"/>
</dbReference>
<dbReference type="GO" id="GO:0016020">
    <property type="term" value="C:membrane"/>
    <property type="evidence" value="ECO:0007669"/>
    <property type="project" value="GOC"/>
</dbReference>
<dbReference type="GO" id="GO:0000035">
    <property type="term" value="F:acyl binding"/>
    <property type="evidence" value="ECO:0000318"/>
    <property type="project" value="GO_Central"/>
</dbReference>
<dbReference type="GO" id="GO:0000036">
    <property type="term" value="F:acyl carrier activity"/>
    <property type="evidence" value="ECO:0000318"/>
    <property type="project" value="GO_Central"/>
</dbReference>
<dbReference type="GO" id="GO:0009245">
    <property type="term" value="P:lipid A biosynthetic process"/>
    <property type="evidence" value="ECO:0000318"/>
    <property type="project" value="GO_Central"/>
</dbReference>
<dbReference type="FunFam" id="1.10.1200.10:FF:000068">
    <property type="entry name" value="Acyl carrier protein"/>
    <property type="match status" value="1"/>
</dbReference>
<dbReference type="Gene3D" id="1.10.1200.10">
    <property type="entry name" value="ACP-like"/>
    <property type="match status" value="1"/>
</dbReference>
<dbReference type="HAMAP" id="MF_01217">
    <property type="entry name" value="Acyl_carrier"/>
    <property type="match status" value="1"/>
</dbReference>
<dbReference type="InterPro" id="IPR003231">
    <property type="entry name" value="ACP"/>
</dbReference>
<dbReference type="InterPro" id="IPR036736">
    <property type="entry name" value="ACP-like_sf"/>
</dbReference>
<dbReference type="InterPro" id="IPR009081">
    <property type="entry name" value="PP-bd_ACP"/>
</dbReference>
<dbReference type="InterPro" id="IPR006162">
    <property type="entry name" value="Ppantetheine_attach_site"/>
</dbReference>
<dbReference type="NCBIfam" id="TIGR00517">
    <property type="entry name" value="acyl_carrier"/>
    <property type="match status" value="1"/>
</dbReference>
<dbReference type="NCBIfam" id="NF002148">
    <property type="entry name" value="PRK00982.1-2"/>
    <property type="match status" value="1"/>
</dbReference>
<dbReference type="NCBIfam" id="NF002150">
    <property type="entry name" value="PRK00982.1-4"/>
    <property type="match status" value="1"/>
</dbReference>
<dbReference type="NCBIfam" id="NF002151">
    <property type="entry name" value="PRK00982.1-5"/>
    <property type="match status" value="1"/>
</dbReference>
<dbReference type="PANTHER" id="PTHR20863">
    <property type="entry name" value="ACYL CARRIER PROTEIN"/>
    <property type="match status" value="1"/>
</dbReference>
<dbReference type="PANTHER" id="PTHR20863:SF76">
    <property type="entry name" value="CARRIER DOMAIN-CONTAINING PROTEIN"/>
    <property type="match status" value="1"/>
</dbReference>
<dbReference type="Pfam" id="PF00550">
    <property type="entry name" value="PP-binding"/>
    <property type="match status" value="1"/>
</dbReference>
<dbReference type="SUPFAM" id="SSF47336">
    <property type="entry name" value="ACP-like"/>
    <property type="match status" value="1"/>
</dbReference>
<dbReference type="PROSITE" id="PS50075">
    <property type="entry name" value="CARRIER"/>
    <property type="match status" value="1"/>
</dbReference>
<dbReference type="PROSITE" id="PS00012">
    <property type="entry name" value="PHOSPHOPANTETHEINE"/>
    <property type="match status" value="1"/>
</dbReference>
<name>ACP_CHLAA</name>
<comment type="function">
    <text evidence="1">Carrier of the growing fatty acid chain in fatty acid biosynthesis.</text>
</comment>
<comment type="pathway">
    <text evidence="1">Lipid metabolism; fatty acid biosynthesis.</text>
</comment>
<comment type="subcellular location">
    <subcellularLocation>
        <location evidence="1">Cytoplasm</location>
    </subcellularLocation>
</comment>
<comment type="PTM">
    <text evidence="1">4'-phosphopantetheine is transferred from CoA to a specific serine of apo-ACP by AcpS. This modification is essential for activity because fatty acids are bound in thioester linkage to the sulfhydryl of the prosthetic group.</text>
</comment>
<comment type="similarity">
    <text evidence="1">Belongs to the acyl carrier protein (ACP) family.</text>
</comment>
<proteinExistence type="inferred from homology"/>
<feature type="chain" id="PRO_1000085597" description="Acyl carrier protein">
    <location>
        <begin position="1"/>
        <end position="82"/>
    </location>
</feature>
<feature type="domain" description="Carrier" evidence="2">
    <location>
        <begin position="4"/>
        <end position="79"/>
    </location>
</feature>
<feature type="modified residue" description="O-(pantetheine 4'-phosphoryl)serine" evidence="2">
    <location>
        <position position="39"/>
    </location>
</feature>
<protein>
    <recommendedName>
        <fullName evidence="1">Acyl carrier protein</fullName>
        <shortName evidence="1">ACP</shortName>
    </recommendedName>
</protein>
<reference key="1">
    <citation type="journal article" date="2011" name="BMC Genomics">
        <title>Complete genome sequence of the filamentous anoxygenic phototrophic bacterium Chloroflexus aurantiacus.</title>
        <authorList>
            <person name="Tang K.H."/>
            <person name="Barry K."/>
            <person name="Chertkov O."/>
            <person name="Dalin E."/>
            <person name="Han C.S."/>
            <person name="Hauser L.J."/>
            <person name="Honchak B.M."/>
            <person name="Karbach L.E."/>
            <person name="Land M.L."/>
            <person name="Lapidus A."/>
            <person name="Larimer F.W."/>
            <person name="Mikhailova N."/>
            <person name="Pitluck S."/>
            <person name="Pierson B.K."/>
            <person name="Blankenship R.E."/>
        </authorList>
    </citation>
    <scope>NUCLEOTIDE SEQUENCE [LARGE SCALE GENOMIC DNA]</scope>
    <source>
        <strain>ATCC 29366 / DSM 635 / J-10-fl</strain>
    </source>
</reference>
<gene>
    <name evidence="1" type="primary">acpP</name>
    <name type="ordered locus">Caur_3419</name>
</gene>